<evidence type="ECO:0000255" key="1">
    <source>
        <dbReference type="HAMAP-Rule" id="MF_00443"/>
    </source>
</evidence>
<keyword id="KW-0963">Cytoplasm</keyword>
<keyword id="KW-1185">Reference proteome</keyword>
<keyword id="KW-0704">Schiff base</keyword>
<keyword id="KW-0784">Thiamine biosynthesis</keyword>
<keyword id="KW-0808">Transferase</keyword>
<feature type="chain" id="PRO_0000162839" description="Thiazole synthase">
    <location>
        <begin position="1"/>
        <end position="256"/>
    </location>
</feature>
<feature type="active site" description="Schiff-base intermediate with DXP" evidence="1">
    <location>
        <position position="95"/>
    </location>
</feature>
<feature type="binding site" evidence="1">
    <location>
        <position position="156"/>
    </location>
    <ligand>
        <name>1-deoxy-D-xylulose 5-phosphate</name>
        <dbReference type="ChEBI" id="CHEBI:57792"/>
    </ligand>
</feature>
<feature type="binding site" evidence="1">
    <location>
        <begin position="182"/>
        <end position="183"/>
    </location>
    <ligand>
        <name>1-deoxy-D-xylulose 5-phosphate</name>
        <dbReference type="ChEBI" id="CHEBI:57792"/>
    </ligand>
</feature>
<feature type="binding site" evidence="1">
    <location>
        <begin position="204"/>
        <end position="205"/>
    </location>
    <ligand>
        <name>1-deoxy-D-xylulose 5-phosphate</name>
        <dbReference type="ChEBI" id="CHEBI:57792"/>
    </ligand>
</feature>
<comment type="function">
    <text evidence="1">Catalyzes the rearrangement of 1-deoxy-D-xylulose 5-phosphate (DXP) to produce the thiazole phosphate moiety of thiamine. Sulfur is provided by the thiocarboxylate moiety of the carrier protein ThiS. In vitro, sulfur can be provided by H(2)S.</text>
</comment>
<comment type="catalytic activity">
    <reaction evidence="1">
        <text>[ThiS sulfur-carrier protein]-C-terminal-Gly-aminoethanethioate + 2-iminoacetate + 1-deoxy-D-xylulose 5-phosphate = [ThiS sulfur-carrier protein]-C-terminal Gly-Gly + 2-[(2R,5Z)-2-carboxy-4-methylthiazol-5(2H)-ylidene]ethyl phosphate + 2 H2O + H(+)</text>
        <dbReference type="Rhea" id="RHEA:26297"/>
        <dbReference type="Rhea" id="RHEA-COMP:12909"/>
        <dbReference type="Rhea" id="RHEA-COMP:19908"/>
        <dbReference type="ChEBI" id="CHEBI:15377"/>
        <dbReference type="ChEBI" id="CHEBI:15378"/>
        <dbReference type="ChEBI" id="CHEBI:57792"/>
        <dbReference type="ChEBI" id="CHEBI:62899"/>
        <dbReference type="ChEBI" id="CHEBI:77846"/>
        <dbReference type="ChEBI" id="CHEBI:90778"/>
        <dbReference type="ChEBI" id="CHEBI:232372"/>
        <dbReference type="EC" id="2.8.1.10"/>
    </reaction>
</comment>
<comment type="pathway">
    <text evidence="1">Cofactor biosynthesis; thiamine diphosphate biosynthesis.</text>
</comment>
<comment type="subunit">
    <text evidence="1">Homotetramer. Forms heterodimers with either ThiH or ThiS.</text>
</comment>
<comment type="subcellular location">
    <subcellularLocation>
        <location evidence="1">Cytoplasm</location>
    </subcellularLocation>
</comment>
<comment type="similarity">
    <text evidence="1">Belongs to the ThiG family.</text>
</comment>
<name>THIG_PHOPR</name>
<dbReference type="EC" id="2.8.1.10" evidence="1"/>
<dbReference type="EMBL" id="CR378663">
    <property type="protein sequence ID" value="CAG18548.1"/>
    <property type="molecule type" value="Genomic_DNA"/>
</dbReference>
<dbReference type="RefSeq" id="WP_011216926.1">
    <property type="nucleotide sequence ID" value="NC_006370.1"/>
</dbReference>
<dbReference type="SMR" id="Q6LVX7"/>
<dbReference type="STRING" id="298386.PBPRA0109"/>
<dbReference type="KEGG" id="ppr:PBPRA0109"/>
<dbReference type="eggNOG" id="COG2022">
    <property type="taxonomic scope" value="Bacteria"/>
</dbReference>
<dbReference type="HOGENOM" id="CLU_062233_1_0_6"/>
<dbReference type="UniPathway" id="UPA00060"/>
<dbReference type="Proteomes" id="UP000000593">
    <property type="component" value="Chromosome 1"/>
</dbReference>
<dbReference type="GO" id="GO:0005737">
    <property type="term" value="C:cytoplasm"/>
    <property type="evidence" value="ECO:0007669"/>
    <property type="project" value="UniProtKB-SubCell"/>
</dbReference>
<dbReference type="GO" id="GO:1990107">
    <property type="term" value="F:thiazole synthase activity"/>
    <property type="evidence" value="ECO:0007669"/>
    <property type="project" value="UniProtKB-EC"/>
</dbReference>
<dbReference type="GO" id="GO:0009229">
    <property type="term" value="P:thiamine diphosphate biosynthetic process"/>
    <property type="evidence" value="ECO:0007669"/>
    <property type="project" value="UniProtKB-UniRule"/>
</dbReference>
<dbReference type="CDD" id="cd04728">
    <property type="entry name" value="ThiG"/>
    <property type="match status" value="1"/>
</dbReference>
<dbReference type="FunFam" id="3.20.20.70:FF:000049">
    <property type="entry name" value="Thiazole synthase"/>
    <property type="match status" value="1"/>
</dbReference>
<dbReference type="Gene3D" id="3.20.20.70">
    <property type="entry name" value="Aldolase class I"/>
    <property type="match status" value="1"/>
</dbReference>
<dbReference type="HAMAP" id="MF_00443">
    <property type="entry name" value="ThiG"/>
    <property type="match status" value="1"/>
</dbReference>
<dbReference type="InterPro" id="IPR013785">
    <property type="entry name" value="Aldolase_TIM"/>
</dbReference>
<dbReference type="InterPro" id="IPR033983">
    <property type="entry name" value="Thiazole_synthase_ThiG"/>
</dbReference>
<dbReference type="InterPro" id="IPR008867">
    <property type="entry name" value="ThiG"/>
</dbReference>
<dbReference type="PANTHER" id="PTHR34266">
    <property type="entry name" value="THIAZOLE SYNTHASE"/>
    <property type="match status" value="1"/>
</dbReference>
<dbReference type="PANTHER" id="PTHR34266:SF2">
    <property type="entry name" value="THIAZOLE SYNTHASE"/>
    <property type="match status" value="1"/>
</dbReference>
<dbReference type="Pfam" id="PF05690">
    <property type="entry name" value="ThiG"/>
    <property type="match status" value="1"/>
</dbReference>
<dbReference type="SUPFAM" id="SSF110399">
    <property type="entry name" value="ThiG-like"/>
    <property type="match status" value="1"/>
</dbReference>
<organism>
    <name type="scientific">Photobacterium profundum (strain SS9)</name>
    <dbReference type="NCBI Taxonomy" id="298386"/>
    <lineage>
        <taxon>Bacteria</taxon>
        <taxon>Pseudomonadati</taxon>
        <taxon>Pseudomonadota</taxon>
        <taxon>Gammaproteobacteria</taxon>
        <taxon>Vibrionales</taxon>
        <taxon>Vibrionaceae</taxon>
        <taxon>Photobacterium</taxon>
    </lineage>
</organism>
<proteinExistence type="inferred from homology"/>
<protein>
    <recommendedName>
        <fullName evidence="1">Thiazole synthase</fullName>
        <ecNumber evidence="1">2.8.1.10</ecNumber>
    </recommendedName>
</protein>
<accession>Q6LVX7</accession>
<gene>
    <name evidence="1" type="primary">thiG</name>
    <name type="ordered locus">PBPRA0109</name>
</gene>
<reference key="1">
    <citation type="journal article" date="2005" name="Science">
        <title>Life at depth: Photobacterium profundum genome sequence and expression analysis.</title>
        <authorList>
            <person name="Vezzi A."/>
            <person name="Campanaro S."/>
            <person name="D'Angelo M."/>
            <person name="Simonato F."/>
            <person name="Vitulo N."/>
            <person name="Lauro F.M."/>
            <person name="Cestaro A."/>
            <person name="Malacrida G."/>
            <person name="Simionati B."/>
            <person name="Cannata N."/>
            <person name="Romualdi C."/>
            <person name="Bartlett D.H."/>
            <person name="Valle G."/>
        </authorList>
    </citation>
    <scope>NUCLEOTIDE SEQUENCE [LARGE SCALE GENOMIC DNA]</scope>
    <source>
        <strain>ATCC BAA-1253 / SS9</strain>
    </source>
</reference>
<sequence length="256" mass="26765">MLTIADKTFSSRLFTGTGKYANSQVMATSIIASGSELVTMALKRVDIDNRDDDILAPLIKAGVNLLPNTSGAKNAKEAIFAAKLAREALGTNWLKLEIHPDPKYLMPDPIETLAAAAELVRQGFIVLPYCHADPVLCKRLEEVGCAAVMPLGAPIGSNKGLASRDFLEIIIDQARVPVIVDAGIGAPSHAAEAMEMGADAVLVNTAIAAAADPIAMGRAFKLAVESGRMAYEAGLAGTINHAIASSPLTAFLDQTA</sequence>